<organism>
    <name type="scientific">Bacillus cereus (strain Q1)</name>
    <dbReference type="NCBI Taxonomy" id="361100"/>
    <lineage>
        <taxon>Bacteria</taxon>
        <taxon>Bacillati</taxon>
        <taxon>Bacillota</taxon>
        <taxon>Bacilli</taxon>
        <taxon>Bacillales</taxon>
        <taxon>Bacillaceae</taxon>
        <taxon>Bacillus</taxon>
        <taxon>Bacillus cereus group</taxon>
    </lineage>
</organism>
<name>SCPB_BACCQ</name>
<sequence length="190" mass="21332">MDRTEQKSIIEGLLFVSGDEGISPEQIAKVLEIEGNEVINILEEMQKECEGAHRGLQIVQYAKVYRFATKKEHASYYQKLIDIPTAASLSQAALETLAIVAYRQPITRTEMEEIRGVKTDKALQTLVSHLLIKEMGRAEGPGRPILYGTTKEFLDTFGLKTLDDLPPLSEENEQMNEADLFFGSLQEISK</sequence>
<feature type="chain" id="PRO_1000187531" description="Segregation and condensation protein B">
    <location>
        <begin position="1"/>
        <end position="190"/>
    </location>
</feature>
<protein>
    <recommendedName>
        <fullName evidence="1">Segregation and condensation protein B</fullName>
    </recommendedName>
</protein>
<comment type="function">
    <text evidence="1">Participates in chromosomal partition during cell division. May act via the formation of a condensin-like complex containing Smc and ScpA that pull DNA away from mid-cell into both cell halves.</text>
</comment>
<comment type="subunit">
    <text evidence="1">Homodimer. Homodimerization may be required to stabilize the binding of ScpA to the Smc head domains. Component of a cohesin-like complex composed of ScpA, ScpB and the Smc homodimer, in which ScpA and ScpB bind to the head domain of Smc. The presence of the three proteins is required for the association of the complex with DNA.</text>
</comment>
<comment type="subcellular location">
    <subcellularLocation>
        <location evidence="1">Cytoplasm</location>
    </subcellularLocation>
    <text evidence="1">Associated with two foci at the outer edges of the nucleoid region in young cells, and at four foci within both cell halves in older cells.</text>
</comment>
<comment type="similarity">
    <text evidence="1">Belongs to the ScpB family.</text>
</comment>
<keyword id="KW-0131">Cell cycle</keyword>
<keyword id="KW-0132">Cell division</keyword>
<keyword id="KW-0159">Chromosome partition</keyword>
<keyword id="KW-0963">Cytoplasm</keyword>
<proteinExistence type="inferred from homology"/>
<accession>B9IWS0</accession>
<dbReference type="EMBL" id="CP000227">
    <property type="protein sequence ID" value="ACM14275.1"/>
    <property type="molecule type" value="Genomic_DNA"/>
</dbReference>
<dbReference type="SMR" id="B9IWS0"/>
<dbReference type="KEGG" id="bcq:BCQ_3847"/>
<dbReference type="HOGENOM" id="CLU_045647_5_3_9"/>
<dbReference type="Proteomes" id="UP000000441">
    <property type="component" value="Chromosome"/>
</dbReference>
<dbReference type="GO" id="GO:0005737">
    <property type="term" value="C:cytoplasm"/>
    <property type="evidence" value="ECO:0007669"/>
    <property type="project" value="UniProtKB-SubCell"/>
</dbReference>
<dbReference type="GO" id="GO:0051301">
    <property type="term" value="P:cell division"/>
    <property type="evidence" value="ECO:0007669"/>
    <property type="project" value="UniProtKB-KW"/>
</dbReference>
<dbReference type="GO" id="GO:0051304">
    <property type="term" value="P:chromosome separation"/>
    <property type="evidence" value="ECO:0007669"/>
    <property type="project" value="InterPro"/>
</dbReference>
<dbReference type="GO" id="GO:0006260">
    <property type="term" value="P:DNA replication"/>
    <property type="evidence" value="ECO:0007669"/>
    <property type="project" value="UniProtKB-UniRule"/>
</dbReference>
<dbReference type="Gene3D" id="1.10.10.10">
    <property type="entry name" value="Winged helix-like DNA-binding domain superfamily/Winged helix DNA-binding domain"/>
    <property type="match status" value="2"/>
</dbReference>
<dbReference type="HAMAP" id="MF_01804">
    <property type="entry name" value="ScpB"/>
    <property type="match status" value="1"/>
</dbReference>
<dbReference type="InterPro" id="IPR005234">
    <property type="entry name" value="ScpB_csome_segregation"/>
</dbReference>
<dbReference type="InterPro" id="IPR036388">
    <property type="entry name" value="WH-like_DNA-bd_sf"/>
</dbReference>
<dbReference type="InterPro" id="IPR036390">
    <property type="entry name" value="WH_DNA-bd_sf"/>
</dbReference>
<dbReference type="NCBIfam" id="TIGR00281">
    <property type="entry name" value="SMC-Scp complex subunit ScpB"/>
    <property type="match status" value="1"/>
</dbReference>
<dbReference type="PANTHER" id="PTHR34298">
    <property type="entry name" value="SEGREGATION AND CONDENSATION PROTEIN B"/>
    <property type="match status" value="1"/>
</dbReference>
<dbReference type="PANTHER" id="PTHR34298:SF2">
    <property type="entry name" value="SEGREGATION AND CONDENSATION PROTEIN B"/>
    <property type="match status" value="1"/>
</dbReference>
<dbReference type="Pfam" id="PF04079">
    <property type="entry name" value="SMC_ScpB"/>
    <property type="match status" value="1"/>
</dbReference>
<dbReference type="PIRSF" id="PIRSF019345">
    <property type="entry name" value="ScpB"/>
    <property type="match status" value="1"/>
</dbReference>
<dbReference type="SUPFAM" id="SSF46785">
    <property type="entry name" value="Winged helix' DNA-binding domain"/>
    <property type="match status" value="2"/>
</dbReference>
<gene>
    <name evidence="1" type="primary">scpB</name>
    <name type="ordered locus">BCQ_3847</name>
</gene>
<reference key="1">
    <citation type="journal article" date="2009" name="J. Bacteriol.">
        <title>Complete genome sequence of the extremophilic Bacillus cereus strain Q1 with industrial applications.</title>
        <authorList>
            <person name="Xiong Z."/>
            <person name="Jiang Y."/>
            <person name="Qi D."/>
            <person name="Lu H."/>
            <person name="Yang F."/>
            <person name="Yang J."/>
            <person name="Chen L."/>
            <person name="Sun L."/>
            <person name="Xu X."/>
            <person name="Xue Y."/>
            <person name="Zhu Y."/>
            <person name="Jin Q."/>
        </authorList>
    </citation>
    <scope>NUCLEOTIDE SEQUENCE [LARGE SCALE GENOMIC DNA]</scope>
    <source>
        <strain>Q1</strain>
    </source>
</reference>
<evidence type="ECO:0000255" key="1">
    <source>
        <dbReference type="HAMAP-Rule" id="MF_01804"/>
    </source>
</evidence>